<feature type="chain" id="PRO_0000313171" description="DNA ligase">
    <location>
        <begin position="1"/>
        <end position="691"/>
    </location>
</feature>
<feature type="domain" description="BRCT" evidence="1">
    <location>
        <begin position="610"/>
        <end position="691"/>
    </location>
</feature>
<feature type="active site" description="N6-AMP-lysine intermediate" evidence="1">
    <location>
        <position position="132"/>
    </location>
</feature>
<feature type="binding site" evidence="1">
    <location>
        <begin position="41"/>
        <end position="45"/>
    </location>
    <ligand>
        <name>NAD(+)</name>
        <dbReference type="ChEBI" id="CHEBI:57540"/>
    </ligand>
</feature>
<feature type="binding site" evidence="1">
    <location>
        <begin position="90"/>
        <end position="91"/>
    </location>
    <ligand>
        <name>NAD(+)</name>
        <dbReference type="ChEBI" id="CHEBI:57540"/>
    </ligand>
</feature>
<feature type="binding site" evidence="1">
    <location>
        <position position="130"/>
    </location>
    <ligand>
        <name>NAD(+)</name>
        <dbReference type="ChEBI" id="CHEBI:57540"/>
    </ligand>
</feature>
<feature type="binding site" evidence="1">
    <location>
        <position position="153"/>
    </location>
    <ligand>
        <name>NAD(+)</name>
        <dbReference type="ChEBI" id="CHEBI:57540"/>
    </ligand>
</feature>
<feature type="binding site" evidence="1">
    <location>
        <position position="190"/>
    </location>
    <ligand>
        <name>NAD(+)</name>
        <dbReference type="ChEBI" id="CHEBI:57540"/>
    </ligand>
</feature>
<feature type="binding site" evidence="1">
    <location>
        <position position="307"/>
    </location>
    <ligand>
        <name>NAD(+)</name>
        <dbReference type="ChEBI" id="CHEBI:57540"/>
    </ligand>
</feature>
<feature type="binding site" evidence="1">
    <location>
        <position position="331"/>
    </location>
    <ligand>
        <name>NAD(+)</name>
        <dbReference type="ChEBI" id="CHEBI:57540"/>
    </ligand>
</feature>
<feature type="binding site" evidence="1">
    <location>
        <position position="425"/>
    </location>
    <ligand>
        <name>Zn(2+)</name>
        <dbReference type="ChEBI" id="CHEBI:29105"/>
    </ligand>
</feature>
<feature type="binding site" evidence="1">
    <location>
        <position position="428"/>
    </location>
    <ligand>
        <name>Zn(2+)</name>
        <dbReference type="ChEBI" id="CHEBI:29105"/>
    </ligand>
</feature>
<feature type="binding site" evidence="1">
    <location>
        <position position="443"/>
    </location>
    <ligand>
        <name>Zn(2+)</name>
        <dbReference type="ChEBI" id="CHEBI:29105"/>
    </ligand>
</feature>
<feature type="binding site" evidence="1">
    <location>
        <position position="449"/>
    </location>
    <ligand>
        <name>Zn(2+)</name>
        <dbReference type="ChEBI" id="CHEBI:29105"/>
    </ligand>
</feature>
<evidence type="ECO:0000255" key="1">
    <source>
        <dbReference type="HAMAP-Rule" id="MF_01588"/>
    </source>
</evidence>
<name>DNLJ_BURVG</name>
<sequence length="691" mass="75508">MARTQAEPPASQPDARAAWLRDQLERANYAYYVLDQPDLPDAEYDRLFGELQQLEADHPELVTPDSPTQRVGGAVASGFTPVVHDAPMLSLNNGFSDDDIVAFDKRVADALDKPTDLAGSVTDPVEYACELKFDGLAISLRYERGVFVQASTRGDGTTGEDVTENVRTIRSIPLKLKGAHVPALLDVRGEVLMFKRDFARLNERQRAAEQREFANPRNAAAGSLRQLDPKITAQRPLSFFSYGIGVLDGMPMPDTHSALLDWYEALGLPVNRERAVVRGAQGLLEFFRKVGERRESLPYDIDGVVYKVNRRDEQDRLGFVSRAPRFALAHKFPAQEALTKLVAIDVQVGRTGAITPVARLEPVFVGGATVTNATLHNEDEVRRKDIRIGDTVIVRRAGDVIPEVVGALLERRPVDAAEFVMPTECPVCGSKIERLPDEAIARCTGGLFCPAQRKQALWHFAQRRALDIDGLGEKIIDQLVELNLVRTPADLFNLGFATLAELDRFAEKSAQNLLDSLEKAKHTTLARFIYGLGIRHVGESTAKDLAKHFGSLDPIMDASIEELLEVNDVGPIVAESIHQFFAEEHNRTVIDQLRAPGKVTWPEGPPAPKAPQGVLAGKTVVLTGTLPTLTRDAAKEMLEAAGAKVAGSVSKKTDYVVAGAEAGSKLAKAEELGIPVLDEDGLHQLLEGNTQ</sequence>
<keyword id="KW-0227">DNA damage</keyword>
<keyword id="KW-0234">DNA repair</keyword>
<keyword id="KW-0235">DNA replication</keyword>
<keyword id="KW-0436">Ligase</keyword>
<keyword id="KW-0460">Magnesium</keyword>
<keyword id="KW-0464">Manganese</keyword>
<keyword id="KW-0479">Metal-binding</keyword>
<keyword id="KW-0520">NAD</keyword>
<keyword id="KW-0862">Zinc</keyword>
<organism>
    <name type="scientific">Burkholderia vietnamiensis (strain G4 / LMG 22486)</name>
    <name type="common">Burkholderia cepacia (strain R1808)</name>
    <dbReference type="NCBI Taxonomy" id="269482"/>
    <lineage>
        <taxon>Bacteria</taxon>
        <taxon>Pseudomonadati</taxon>
        <taxon>Pseudomonadota</taxon>
        <taxon>Betaproteobacteria</taxon>
        <taxon>Burkholderiales</taxon>
        <taxon>Burkholderiaceae</taxon>
        <taxon>Burkholderia</taxon>
        <taxon>Burkholderia cepacia complex</taxon>
    </lineage>
</organism>
<comment type="function">
    <text evidence="1">DNA ligase that catalyzes the formation of phosphodiester linkages between 5'-phosphoryl and 3'-hydroxyl groups in double-stranded DNA using NAD as a coenzyme and as the energy source for the reaction. It is essential for DNA replication and repair of damaged DNA.</text>
</comment>
<comment type="catalytic activity">
    <reaction evidence="1">
        <text>NAD(+) + (deoxyribonucleotide)n-3'-hydroxyl + 5'-phospho-(deoxyribonucleotide)m = (deoxyribonucleotide)n+m + AMP + beta-nicotinamide D-nucleotide.</text>
        <dbReference type="EC" id="6.5.1.2"/>
    </reaction>
</comment>
<comment type="cofactor">
    <cofactor evidence="1">
        <name>Mg(2+)</name>
        <dbReference type="ChEBI" id="CHEBI:18420"/>
    </cofactor>
    <cofactor evidence="1">
        <name>Mn(2+)</name>
        <dbReference type="ChEBI" id="CHEBI:29035"/>
    </cofactor>
</comment>
<comment type="similarity">
    <text evidence="1">Belongs to the NAD-dependent DNA ligase family. LigA subfamily.</text>
</comment>
<protein>
    <recommendedName>
        <fullName evidence="1">DNA ligase</fullName>
        <ecNumber evidence="1">6.5.1.2</ecNumber>
    </recommendedName>
    <alternativeName>
        <fullName evidence="1">Polydeoxyribonucleotide synthase [NAD(+)]</fullName>
    </alternativeName>
</protein>
<dbReference type="EC" id="6.5.1.2" evidence="1"/>
<dbReference type="EMBL" id="CP000614">
    <property type="protein sequence ID" value="ABO54934.1"/>
    <property type="molecule type" value="Genomic_DNA"/>
</dbReference>
<dbReference type="SMR" id="A4JF81"/>
<dbReference type="KEGG" id="bvi:Bcep1808_1931"/>
<dbReference type="eggNOG" id="COG0272">
    <property type="taxonomic scope" value="Bacteria"/>
</dbReference>
<dbReference type="HOGENOM" id="CLU_007764_2_1_4"/>
<dbReference type="Proteomes" id="UP000002287">
    <property type="component" value="Chromosome 1"/>
</dbReference>
<dbReference type="GO" id="GO:0005829">
    <property type="term" value="C:cytosol"/>
    <property type="evidence" value="ECO:0007669"/>
    <property type="project" value="TreeGrafter"/>
</dbReference>
<dbReference type="GO" id="GO:0003677">
    <property type="term" value="F:DNA binding"/>
    <property type="evidence" value="ECO:0007669"/>
    <property type="project" value="InterPro"/>
</dbReference>
<dbReference type="GO" id="GO:0003911">
    <property type="term" value="F:DNA ligase (NAD+) activity"/>
    <property type="evidence" value="ECO:0007669"/>
    <property type="project" value="UniProtKB-UniRule"/>
</dbReference>
<dbReference type="GO" id="GO:0046872">
    <property type="term" value="F:metal ion binding"/>
    <property type="evidence" value="ECO:0007669"/>
    <property type="project" value="UniProtKB-KW"/>
</dbReference>
<dbReference type="GO" id="GO:0006281">
    <property type="term" value="P:DNA repair"/>
    <property type="evidence" value="ECO:0007669"/>
    <property type="project" value="UniProtKB-KW"/>
</dbReference>
<dbReference type="GO" id="GO:0006260">
    <property type="term" value="P:DNA replication"/>
    <property type="evidence" value="ECO:0007669"/>
    <property type="project" value="UniProtKB-KW"/>
</dbReference>
<dbReference type="CDD" id="cd17748">
    <property type="entry name" value="BRCT_DNA_ligase_like"/>
    <property type="match status" value="1"/>
</dbReference>
<dbReference type="CDD" id="cd00114">
    <property type="entry name" value="LIGANc"/>
    <property type="match status" value="1"/>
</dbReference>
<dbReference type="FunFam" id="1.10.150.20:FF:000006">
    <property type="entry name" value="DNA ligase"/>
    <property type="match status" value="1"/>
</dbReference>
<dbReference type="FunFam" id="1.10.150.20:FF:000007">
    <property type="entry name" value="DNA ligase"/>
    <property type="match status" value="1"/>
</dbReference>
<dbReference type="FunFam" id="1.10.287.610:FF:000002">
    <property type="entry name" value="DNA ligase"/>
    <property type="match status" value="1"/>
</dbReference>
<dbReference type="FunFam" id="2.40.50.140:FF:000012">
    <property type="entry name" value="DNA ligase"/>
    <property type="match status" value="1"/>
</dbReference>
<dbReference type="FunFam" id="3.30.470.30:FF:000001">
    <property type="entry name" value="DNA ligase"/>
    <property type="match status" value="1"/>
</dbReference>
<dbReference type="FunFam" id="3.40.50.10190:FF:000054">
    <property type="entry name" value="DNA ligase"/>
    <property type="match status" value="1"/>
</dbReference>
<dbReference type="Gene3D" id="6.20.10.30">
    <property type="match status" value="1"/>
</dbReference>
<dbReference type="Gene3D" id="1.10.150.20">
    <property type="entry name" value="5' to 3' exonuclease, C-terminal subdomain"/>
    <property type="match status" value="2"/>
</dbReference>
<dbReference type="Gene3D" id="3.40.50.10190">
    <property type="entry name" value="BRCT domain"/>
    <property type="match status" value="1"/>
</dbReference>
<dbReference type="Gene3D" id="3.30.470.30">
    <property type="entry name" value="DNA ligase/mRNA capping enzyme"/>
    <property type="match status" value="1"/>
</dbReference>
<dbReference type="Gene3D" id="1.10.287.610">
    <property type="entry name" value="Helix hairpin bin"/>
    <property type="match status" value="1"/>
</dbReference>
<dbReference type="Gene3D" id="2.40.50.140">
    <property type="entry name" value="Nucleic acid-binding proteins"/>
    <property type="match status" value="1"/>
</dbReference>
<dbReference type="HAMAP" id="MF_01588">
    <property type="entry name" value="DNA_ligase_A"/>
    <property type="match status" value="1"/>
</dbReference>
<dbReference type="InterPro" id="IPR001357">
    <property type="entry name" value="BRCT_dom"/>
</dbReference>
<dbReference type="InterPro" id="IPR036420">
    <property type="entry name" value="BRCT_dom_sf"/>
</dbReference>
<dbReference type="InterPro" id="IPR041663">
    <property type="entry name" value="DisA/LigA_HHH"/>
</dbReference>
<dbReference type="InterPro" id="IPR001679">
    <property type="entry name" value="DNA_ligase"/>
</dbReference>
<dbReference type="InterPro" id="IPR018239">
    <property type="entry name" value="DNA_ligase_AS"/>
</dbReference>
<dbReference type="InterPro" id="IPR033136">
    <property type="entry name" value="DNA_ligase_CS"/>
</dbReference>
<dbReference type="InterPro" id="IPR013839">
    <property type="entry name" value="DNAligase_adenylation"/>
</dbReference>
<dbReference type="InterPro" id="IPR013840">
    <property type="entry name" value="DNAligase_N"/>
</dbReference>
<dbReference type="InterPro" id="IPR003583">
    <property type="entry name" value="Hlx-hairpin-Hlx_DNA-bd_motif"/>
</dbReference>
<dbReference type="InterPro" id="IPR012340">
    <property type="entry name" value="NA-bd_OB-fold"/>
</dbReference>
<dbReference type="InterPro" id="IPR004150">
    <property type="entry name" value="NAD_DNA_ligase_OB"/>
</dbReference>
<dbReference type="InterPro" id="IPR010994">
    <property type="entry name" value="RuvA_2-like"/>
</dbReference>
<dbReference type="InterPro" id="IPR004149">
    <property type="entry name" value="Znf_DNAligase_C4"/>
</dbReference>
<dbReference type="NCBIfam" id="TIGR00575">
    <property type="entry name" value="dnlj"/>
    <property type="match status" value="1"/>
</dbReference>
<dbReference type="NCBIfam" id="NF005932">
    <property type="entry name" value="PRK07956.1"/>
    <property type="match status" value="1"/>
</dbReference>
<dbReference type="PANTHER" id="PTHR23389">
    <property type="entry name" value="CHROMOSOME TRANSMISSION FIDELITY FACTOR 18"/>
    <property type="match status" value="1"/>
</dbReference>
<dbReference type="PANTHER" id="PTHR23389:SF9">
    <property type="entry name" value="DNA LIGASE"/>
    <property type="match status" value="1"/>
</dbReference>
<dbReference type="Pfam" id="PF00533">
    <property type="entry name" value="BRCT"/>
    <property type="match status" value="1"/>
</dbReference>
<dbReference type="Pfam" id="PF01653">
    <property type="entry name" value="DNA_ligase_aden"/>
    <property type="match status" value="1"/>
</dbReference>
<dbReference type="Pfam" id="PF03120">
    <property type="entry name" value="DNA_ligase_OB"/>
    <property type="match status" value="1"/>
</dbReference>
<dbReference type="Pfam" id="PF03119">
    <property type="entry name" value="DNA_ligase_ZBD"/>
    <property type="match status" value="1"/>
</dbReference>
<dbReference type="Pfam" id="PF12826">
    <property type="entry name" value="HHH_2"/>
    <property type="match status" value="1"/>
</dbReference>
<dbReference type="Pfam" id="PF14520">
    <property type="entry name" value="HHH_5"/>
    <property type="match status" value="1"/>
</dbReference>
<dbReference type="Pfam" id="PF22745">
    <property type="entry name" value="Nlig-Ia"/>
    <property type="match status" value="1"/>
</dbReference>
<dbReference type="PIRSF" id="PIRSF001604">
    <property type="entry name" value="LigA"/>
    <property type="match status" value="1"/>
</dbReference>
<dbReference type="SMART" id="SM00292">
    <property type="entry name" value="BRCT"/>
    <property type="match status" value="1"/>
</dbReference>
<dbReference type="SMART" id="SM00278">
    <property type="entry name" value="HhH1"/>
    <property type="match status" value="3"/>
</dbReference>
<dbReference type="SMART" id="SM00532">
    <property type="entry name" value="LIGANc"/>
    <property type="match status" value="1"/>
</dbReference>
<dbReference type="SUPFAM" id="SSF52113">
    <property type="entry name" value="BRCT domain"/>
    <property type="match status" value="1"/>
</dbReference>
<dbReference type="SUPFAM" id="SSF56091">
    <property type="entry name" value="DNA ligase/mRNA capping enzyme, catalytic domain"/>
    <property type="match status" value="1"/>
</dbReference>
<dbReference type="SUPFAM" id="SSF50249">
    <property type="entry name" value="Nucleic acid-binding proteins"/>
    <property type="match status" value="1"/>
</dbReference>
<dbReference type="SUPFAM" id="SSF47781">
    <property type="entry name" value="RuvA domain 2-like"/>
    <property type="match status" value="1"/>
</dbReference>
<dbReference type="PROSITE" id="PS50172">
    <property type="entry name" value="BRCT"/>
    <property type="match status" value="1"/>
</dbReference>
<dbReference type="PROSITE" id="PS01055">
    <property type="entry name" value="DNA_LIGASE_N1"/>
    <property type="match status" value="1"/>
</dbReference>
<dbReference type="PROSITE" id="PS01056">
    <property type="entry name" value="DNA_LIGASE_N2"/>
    <property type="match status" value="1"/>
</dbReference>
<gene>
    <name evidence="1" type="primary">ligA</name>
    <name type="ordered locus">Bcep1808_1931</name>
</gene>
<reference key="1">
    <citation type="submission" date="2007-03" db="EMBL/GenBank/DDBJ databases">
        <title>Complete sequence of chromosome 1 of Burkholderia vietnamiensis G4.</title>
        <authorList>
            <consortium name="US DOE Joint Genome Institute"/>
            <person name="Copeland A."/>
            <person name="Lucas S."/>
            <person name="Lapidus A."/>
            <person name="Barry K."/>
            <person name="Detter J.C."/>
            <person name="Glavina del Rio T."/>
            <person name="Hammon N."/>
            <person name="Israni S."/>
            <person name="Dalin E."/>
            <person name="Tice H."/>
            <person name="Pitluck S."/>
            <person name="Chain P."/>
            <person name="Malfatti S."/>
            <person name="Shin M."/>
            <person name="Vergez L."/>
            <person name="Schmutz J."/>
            <person name="Larimer F."/>
            <person name="Land M."/>
            <person name="Hauser L."/>
            <person name="Kyrpides N."/>
            <person name="Tiedje J."/>
            <person name="Richardson P."/>
        </authorList>
    </citation>
    <scope>NUCLEOTIDE SEQUENCE [LARGE SCALE GENOMIC DNA]</scope>
    <source>
        <strain>G4 / LMG 22486</strain>
    </source>
</reference>
<accession>A4JF81</accession>
<proteinExistence type="inferred from homology"/>